<proteinExistence type="inferred from homology"/>
<sequence>MTATNHPKLFKRPVDGVLLLDKPGGMTSNEALQRVKRLFHAKKAGHTGSLDPLATGLLPICLGEATKFSQFLLGADKSYSVKGRLGVRTASGDSESPILTERPIPKLTKRALEKTLSAFRGVIDQTPSMYSALKHKGQPLYKLARQGIEVERKTRQVTIYELTLLDWDNESIELYVHCSKGTYIRTLLDDVGEALGCGAHVVALRRLRVAHYHEDQMIKLAHLEREYDKANYTGLDRYLLPLETMVSHFPAIKLSSSTAFYLQQGQAVMVPNAPTHGFVRLRDQNDQFIGIGEILSDARIAPRRLIQKR</sequence>
<feature type="chain" id="PRO_1000084578" description="tRNA pseudouridine synthase B">
    <location>
        <begin position="1"/>
        <end position="309"/>
    </location>
</feature>
<feature type="active site" description="Nucleophile" evidence="1">
    <location>
        <position position="51"/>
    </location>
</feature>
<accession>A9KBM3</accession>
<protein>
    <recommendedName>
        <fullName evidence="1">tRNA pseudouridine synthase B</fullName>
        <ecNumber evidence="1">5.4.99.25</ecNumber>
    </recommendedName>
    <alternativeName>
        <fullName evidence="1">tRNA pseudouridine(55) synthase</fullName>
        <shortName evidence="1">Psi55 synthase</shortName>
    </alternativeName>
    <alternativeName>
        <fullName evidence="1">tRNA pseudouridylate synthase</fullName>
    </alternativeName>
    <alternativeName>
        <fullName evidence="1">tRNA-uridine isomerase</fullName>
    </alternativeName>
</protein>
<keyword id="KW-0413">Isomerase</keyword>
<keyword id="KW-0819">tRNA processing</keyword>
<gene>
    <name evidence="1" type="primary">truB</name>
    <name type="ordered locus">CBUD_0565</name>
</gene>
<evidence type="ECO:0000255" key="1">
    <source>
        <dbReference type="HAMAP-Rule" id="MF_01080"/>
    </source>
</evidence>
<name>TRUB_COXBN</name>
<dbReference type="EC" id="5.4.99.25" evidence="1"/>
<dbReference type="EMBL" id="CP000733">
    <property type="protein sequence ID" value="ABS77889.1"/>
    <property type="molecule type" value="Genomic_DNA"/>
</dbReference>
<dbReference type="RefSeq" id="WP_011996625.1">
    <property type="nucleotide sequence ID" value="NC_009727.1"/>
</dbReference>
<dbReference type="SMR" id="A9KBM3"/>
<dbReference type="KEGG" id="cbd:CBUD_0565"/>
<dbReference type="HOGENOM" id="CLU_032087_0_3_6"/>
<dbReference type="Proteomes" id="UP000008555">
    <property type="component" value="Chromosome"/>
</dbReference>
<dbReference type="GO" id="GO:0003723">
    <property type="term" value="F:RNA binding"/>
    <property type="evidence" value="ECO:0007669"/>
    <property type="project" value="InterPro"/>
</dbReference>
<dbReference type="GO" id="GO:0160148">
    <property type="term" value="F:tRNA pseudouridine(55) synthase activity"/>
    <property type="evidence" value="ECO:0007669"/>
    <property type="project" value="UniProtKB-EC"/>
</dbReference>
<dbReference type="GO" id="GO:1990481">
    <property type="term" value="P:mRNA pseudouridine synthesis"/>
    <property type="evidence" value="ECO:0007669"/>
    <property type="project" value="TreeGrafter"/>
</dbReference>
<dbReference type="GO" id="GO:0031119">
    <property type="term" value="P:tRNA pseudouridine synthesis"/>
    <property type="evidence" value="ECO:0007669"/>
    <property type="project" value="UniProtKB-UniRule"/>
</dbReference>
<dbReference type="CDD" id="cd02573">
    <property type="entry name" value="PseudoU_synth_EcTruB"/>
    <property type="match status" value="1"/>
</dbReference>
<dbReference type="CDD" id="cd21152">
    <property type="entry name" value="PUA_TruB_bacterial"/>
    <property type="match status" value="1"/>
</dbReference>
<dbReference type="FunFam" id="2.30.130.10:FF:000012">
    <property type="entry name" value="tRNA pseudouridine synthase B"/>
    <property type="match status" value="1"/>
</dbReference>
<dbReference type="FunFam" id="3.30.2350.10:FF:000003">
    <property type="entry name" value="tRNA pseudouridine synthase B"/>
    <property type="match status" value="1"/>
</dbReference>
<dbReference type="Gene3D" id="3.30.2350.10">
    <property type="entry name" value="Pseudouridine synthase"/>
    <property type="match status" value="1"/>
</dbReference>
<dbReference type="Gene3D" id="2.30.130.10">
    <property type="entry name" value="PUA domain"/>
    <property type="match status" value="1"/>
</dbReference>
<dbReference type="HAMAP" id="MF_01080">
    <property type="entry name" value="TruB_bact"/>
    <property type="match status" value="1"/>
</dbReference>
<dbReference type="InterPro" id="IPR020103">
    <property type="entry name" value="PsdUridine_synth_cat_dom_sf"/>
</dbReference>
<dbReference type="InterPro" id="IPR002501">
    <property type="entry name" value="PsdUridine_synth_N"/>
</dbReference>
<dbReference type="InterPro" id="IPR015947">
    <property type="entry name" value="PUA-like_sf"/>
</dbReference>
<dbReference type="InterPro" id="IPR036974">
    <property type="entry name" value="PUA_sf"/>
</dbReference>
<dbReference type="InterPro" id="IPR014780">
    <property type="entry name" value="tRNA_psdUridine_synth_TruB"/>
</dbReference>
<dbReference type="InterPro" id="IPR015240">
    <property type="entry name" value="tRNA_sdUridine_synth_fam1_C"/>
</dbReference>
<dbReference type="InterPro" id="IPR032819">
    <property type="entry name" value="TruB_C"/>
</dbReference>
<dbReference type="NCBIfam" id="TIGR00431">
    <property type="entry name" value="TruB"/>
    <property type="match status" value="1"/>
</dbReference>
<dbReference type="PANTHER" id="PTHR13767:SF2">
    <property type="entry name" value="PSEUDOURIDYLATE SYNTHASE TRUB1"/>
    <property type="match status" value="1"/>
</dbReference>
<dbReference type="PANTHER" id="PTHR13767">
    <property type="entry name" value="TRNA-PSEUDOURIDINE SYNTHASE"/>
    <property type="match status" value="1"/>
</dbReference>
<dbReference type="Pfam" id="PF09157">
    <property type="entry name" value="TruB-C_2"/>
    <property type="match status" value="1"/>
</dbReference>
<dbReference type="Pfam" id="PF16198">
    <property type="entry name" value="TruB_C_2"/>
    <property type="match status" value="1"/>
</dbReference>
<dbReference type="Pfam" id="PF01509">
    <property type="entry name" value="TruB_N"/>
    <property type="match status" value="1"/>
</dbReference>
<dbReference type="SUPFAM" id="SSF55120">
    <property type="entry name" value="Pseudouridine synthase"/>
    <property type="match status" value="1"/>
</dbReference>
<dbReference type="SUPFAM" id="SSF88697">
    <property type="entry name" value="PUA domain-like"/>
    <property type="match status" value="1"/>
</dbReference>
<organism>
    <name type="scientific">Coxiella burnetii (strain Dugway 5J108-111)</name>
    <dbReference type="NCBI Taxonomy" id="434922"/>
    <lineage>
        <taxon>Bacteria</taxon>
        <taxon>Pseudomonadati</taxon>
        <taxon>Pseudomonadota</taxon>
        <taxon>Gammaproteobacteria</taxon>
        <taxon>Legionellales</taxon>
        <taxon>Coxiellaceae</taxon>
        <taxon>Coxiella</taxon>
    </lineage>
</organism>
<comment type="function">
    <text evidence="1">Responsible for synthesis of pseudouridine from uracil-55 in the psi GC loop of transfer RNAs.</text>
</comment>
<comment type="catalytic activity">
    <reaction evidence="1">
        <text>uridine(55) in tRNA = pseudouridine(55) in tRNA</text>
        <dbReference type="Rhea" id="RHEA:42532"/>
        <dbReference type="Rhea" id="RHEA-COMP:10101"/>
        <dbReference type="Rhea" id="RHEA-COMP:10102"/>
        <dbReference type="ChEBI" id="CHEBI:65314"/>
        <dbReference type="ChEBI" id="CHEBI:65315"/>
        <dbReference type="EC" id="5.4.99.25"/>
    </reaction>
</comment>
<comment type="similarity">
    <text evidence="1">Belongs to the pseudouridine synthase TruB family. Type 1 subfamily.</text>
</comment>
<reference key="1">
    <citation type="journal article" date="2009" name="Infect. Immun.">
        <title>Comparative genomics reveal extensive transposon-mediated genomic plasticity and diversity among potential effector proteins within the genus Coxiella.</title>
        <authorList>
            <person name="Beare P.A."/>
            <person name="Unsworth N."/>
            <person name="Andoh M."/>
            <person name="Voth D.E."/>
            <person name="Omsland A."/>
            <person name="Gilk S.D."/>
            <person name="Williams K.P."/>
            <person name="Sobral B.W."/>
            <person name="Kupko J.J. III"/>
            <person name="Porcella S.F."/>
            <person name="Samuel J.E."/>
            <person name="Heinzen R.A."/>
        </authorList>
    </citation>
    <scope>NUCLEOTIDE SEQUENCE [LARGE SCALE GENOMIC DNA]</scope>
    <source>
        <strain>Dugway 5J108-111</strain>
    </source>
</reference>